<dbReference type="EC" id="5.3.1.24" evidence="1"/>
<dbReference type="EMBL" id="CP000927">
    <property type="protein sequence ID" value="ABZ74095.1"/>
    <property type="molecule type" value="Genomic_DNA"/>
</dbReference>
<dbReference type="SMR" id="B0T692"/>
<dbReference type="STRING" id="366602.Caul_4975"/>
<dbReference type="KEGG" id="cak:Caul_4975"/>
<dbReference type="eggNOG" id="COG0135">
    <property type="taxonomic scope" value="Bacteria"/>
</dbReference>
<dbReference type="HOGENOM" id="CLU_076364_1_1_5"/>
<dbReference type="OrthoDB" id="9796196at2"/>
<dbReference type="UniPathway" id="UPA00035">
    <property type="reaction ID" value="UER00042"/>
</dbReference>
<dbReference type="GO" id="GO:0004640">
    <property type="term" value="F:phosphoribosylanthranilate isomerase activity"/>
    <property type="evidence" value="ECO:0007669"/>
    <property type="project" value="UniProtKB-UniRule"/>
</dbReference>
<dbReference type="GO" id="GO:0000162">
    <property type="term" value="P:L-tryptophan biosynthetic process"/>
    <property type="evidence" value="ECO:0007669"/>
    <property type="project" value="UniProtKB-UniRule"/>
</dbReference>
<dbReference type="CDD" id="cd00405">
    <property type="entry name" value="PRAI"/>
    <property type="match status" value="1"/>
</dbReference>
<dbReference type="Gene3D" id="3.20.20.70">
    <property type="entry name" value="Aldolase class I"/>
    <property type="match status" value="1"/>
</dbReference>
<dbReference type="HAMAP" id="MF_00135">
    <property type="entry name" value="PRAI"/>
    <property type="match status" value="1"/>
</dbReference>
<dbReference type="InterPro" id="IPR013785">
    <property type="entry name" value="Aldolase_TIM"/>
</dbReference>
<dbReference type="InterPro" id="IPR001240">
    <property type="entry name" value="PRAI_dom"/>
</dbReference>
<dbReference type="InterPro" id="IPR011060">
    <property type="entry name" value="RibuloseP-bd_barrel"/>
</dbReference>
<dbReference type="InterPro" id="IPR044643">
    <property type="entry name" value="TrpF_fam"/>
</dbReference>
<dbReference type="NCBIfam" id="NF002295">
    <property type="entry name" value="PRK01222.1-1"/>
    <property type="match status" value="1"/>
</dbReference>
<dbReference type="PANTHER" id="PTHR42894">
    <property type="entry name" value="N-(5'-PHOSPHORIBOSYL)ANTHRANILATE ISOMERASE"/>
    <property type="match status" value="1"/>
</dbReference>
<dbReference type="PANTHER" id="PTHR42894:SF1">
    <property type="entry name" value="N-(5'-PHOSPHORIBOSYL)ANTHRANILATE ISOMERASE"/>
    <property type="match status" value="1"/>
</dbReference>
<dbReference type="Pfam" id="PF00697">
    <property type="entry name" value="PRAI"/>
    <property type="match status" value="1"/>
</dbReference>
<dbReference type="SUPFAM" id="SSF51366">
    <property type="entry name" value="Ribulose-phoshate binding barrel"/>
    <property type="match status" value="1"/>
</dbReference>
<feature type="chain" id="PRO_1000197088" description="N-(5'-phosphoribosyl)anthranilate isomerase">
    <location>
        <begin position="1"/>
        <end position="213"/>
    </location>
</feature>
<evidence type="ECO:0000255" key="1">
    <source>
        <dbReference type="HAMAP-Rule" id="MF_00135"/>
    </source>
</evidence>
<keyword id="KW-0028">Amino-acid biosynthesis</keyword>
<keyword id="KW-0057">Aromatic amino acid biosynthesis</keyword>
<keyword id="KW-0413">Isomerase</keyword>
<keyword id="KW-0822">Tryptophan biosynthesis</keyword>
<name>TRPF_CAUSK</name>
<comment type="catalytic activity">
    <reaction evidence="1">
        <text>N-(5-phospho-beta-D-ribosyl)anthranilate = 1-(2-carboxyphenylamino)-1-deoxy-D-ribulose 5-phosphate</text>
        <dbReference type="Rhea" id="RHEA:21540"/>
        <dbReference type="ChEBI" id="CHEBI:18277"/>
        <dbReference type="ChEBI" id="CHEBI:58613"/>
        <dbReference type="EC" id="5.3.1.24"/>
    </reaction>
</comment>
<comment type="pathway">
    <text evidence="1">Amino-acid biosynthesis; L-tryptophan biosynthesis; L-tryptophan from chorismate: step 3/5.</text>
</comment>
<comment type="similarity">
    <text evidence="1">Belongs to the TrpF family.</text>
</comment>
<reference key="1">
    <citation type="submission" date="2008-01" db="EMBL/GenBank/DDBJ databases">
        <title>Complete sequence of chromosome of Caulobacter sp. K31.</title>
        <authorList>
            <consortium name="US DOE Joint Genome Institute"/>
            <person name="Copeland A."/>
            <person name="Lucas S."/>
            <person name="Lapidus A."/>
            <person name="Barry K."/>
            <person name="Glavina del Rio T."/>
            <person name="Dalin E."/>
            <person name="Tice H."/>
            <person name="Pitluck S."/>
            <person name="Bruce D."/>
            <person name="Goodwin L."/>
            <person name="Thompson L.S."/>
            <person name="Brettin T."/>
            <person name="Detter J.C."/>
            <person name="Han C."/>
            <person name="Schmutz J."/>
            <person name="Larimer F."/>
            <person name="Land M."/>
            <person name="Hauser L."/>
            <person name="Kyrpides N."/>
            <person name="Kim E."/>
            <person name="Stephens C."/>
            <person name="Richardson P."/>
        </authorList>
    </citation>
    <scope>NUCLEOTIDE SEQUENCE [LARGE SCALE GENOMIC DNA]</scope>
    <source>
        <strain>K31</strain>
    </source>
</reference>
<gene>
    <name evidence="1" type="primary">trpF</name>
    <name type="ordered locus">Caul_4975</name>
</gene>
<sequence length="213" mass="22318">MVQAKICGLSTLDAVTAAVAGGAAFVGFVFFEKSPRNLDPEAAARLVASLRQSPVKTVAVTVDPDDALIDRLMATMKPDLIQVHGRETPSRVRQIAERSGAGVIKAFSVSSAADVDQAGAFDGLVEHLMFDARPVEGSVLPGGTGARFDWSLLQGRRFSRPHFLAGGLDPWNVAEAVKASGAPLVDVSSGVERGPGLKDPALITAFLDAVKRV</sequence>
<proteinExistence type="inferred from homology"/>
<organism>
    <name type="scientific">Caulobacter sp. (strain K31)</name>
    <dbReference type="NCBI Taxonomy" id="366602"/>
    <lineage>
        <taxon>Bacteria</taxon>
        <taxon>Pseudomonadati</taxon>
        <taxon>Pseudomonadota</taxon>
        <taxon>Alphaproteobacteria</taxon>
        <taxon>Caulobacterales</taxon>
        <taxon>Caulobacteraceae</taxon>
        <taxon>Caulobacter</taxon>
    </lineage>
</organism>
<accession>B0T692</accession>
<protein>
    <recommendedName>
        <fullName evidence="1">N-(5'-phosphoribosyl)anthranilate isomerase</fullName>
        <shortName evidence="1">PRAI</shortName>
        <ecNumber evidence="1">5.3.1.24</ecNumber>
    </recommendedName>
</protein>